<protein>
    <recommendedName>
        <fullName evidence="1">Acetyl-coenzyme A carboxylase carboxyl transferase subunit beta</fullName>
        <shortName evidence="1">ACCase subunit beta</shortName>
        <shortName evidence="1">Acetyl-CoA carboxylase carboxyltransferase subunit beta</shortName>
        <ecNumber evidence="1">2.1.3.15</ecNumber>
    </recommendedName>
</protein>
<sequence>MSWIERIKSNITPTRKASIPEGVWTKCDSCGQVLYRAELERNLEVCPKCDHHMRMTARNRLHSLLDEGSLVELGSELEPKDVLKFRDSKKYKDRLASAQKETGEKDALVVMKGTLYGMPVVAAAFEFAFMGGSMGSVVGARFVRAVEQALEDNCPLICFSASGGARMQEALMSLMQMAKTSAALAKMQERGLPYISVLTDPTMGGVSASFAMLGDLNIAEPKALIGFAGPRVIEQTVREKLPPGFQRSEFLIEKGAIDMIVRRPEMRLKLASILAKLMNLPAPNPEAPREGVVVPPVPDQEPEA</sequence>
<feature type="chain" id="PRO_0000358993" description="Acetyl-coenzyme A carboxylase carboxyl transferase subunit beta">
    <location>
        <begin position="1"/>
        <end position="304"/>
    </location>
</feature>
<feature type="domain" description="CoA carboxyltransferase N-terminal" evidence="2">
    <location>
        <begin position="23"/>
        <end position="292"/>
    </location>
</feature>
<feature type="zinc finger region" description="C4-type" evidence="1">
    <location>
        <begin position="27"/>
        <end position="49"/>
    </location>
</feature>
<feature type="region of interest" description="Disordered" evidence="3">
    <location>
        <begin position="284"/>
        <end position="304"/>
    </location>
</feature>
<feature type="compositionally biased region" description="Pro residues" evidence="3">
    <location>
        <begin position="295"/>
        <end position="304"/>
    </location>
</feature>
<feature type="binding site" evidence="1">
    <location>
        <position position="27"/>
    </location>
    <ligand>
        <name>Zn(2+)</name>
        <dbReference type="ChEBI" id="CHEBI:29105"/>
    </ligand>
</feature>
<feature type="binding site" evidence="1">
    <location>
        <position position="30"/>
    </location>
    <ligand>
        <name>Zn(2+)</name>
        <dbReference type="ChEBI" id="CHEBI:29105"/>
    </ligand>
</feature>
<feature type="binding site" evidence="1">
    <location>
        <position position="46"/>
    </location>
    <ligand>
        <name>Zn(2+)</name>
        <dbReference type="ChEBI" id="CHEBI:29105"/>
    </ligand>
</feature>
<feature type="binding site" evidence="1">
    <location>
        <position position="49"/>
    </location>
    <ligand>
        <name>Zn(2+)</name>
        <dbReference type="ChEBI" id="CHEBI:29105"/>
    </ligand>
</feature>
<evidence type="ECO:0000255" key="1">
    <source>
        <dbReference type="HAMAP-Rule" id="MF_01395"/>
    </source>
</evidence>
<evidence type="ECO:0000255" key="2">
    <source>
        <dbReference type="PROSITE-ProRule" id="PRU01136"/>
    </source>
</evidence>
<evidence type="ECO:0000256" key="3">
    <source>
        <dbReference type="SAM" id="MobiDB-lite"/>
    </source>
</evidence>
<gene>
    <name evidence="1" type="primary">accD</name>
    <name type="ordered locus">EcHS_A2467</name>
</gene>
<name>ACCD_ECOHS</name>
<organism>
    <name type="scientific">Escherichia coli O9:H4 (strain HS)</name>
    <dbReference type="NCBI Taxonomy" id="331112"/>
    <lineage>
        <taxon>Bacteria</taxon>
        <taxon>Pseudomonadati</taxon>
        <taxon>Pseudomonadota</taxon>
        <taxon>Gammaproteobacteria</taxon>
        <taxon>Enterobacterales</taxon>
        <taxon>Enterobacteriaceae</taxon>
        <taxon>Escherichia</taxon>
    </lineage>
</organism>
<keyword id="KW-0067">ATP-binding</keyword>
<keyword id="KW-0963">Cytoplasm</keyword>
<keyword id="KW-0275">Fatty acid biosynthesis</keyword>
<keyword id="KW-0276">Fatty acid metabolism</keyword>
<keyword id="KW-0444">Lipid biosynthesis</keyword>
<keyword id="KW-0443">Lipid metabolism</keyword>
<keyword id="KW-0479">Metal-binding</keyword>
<keyword id="KW-0547">Nucleotide-binding</keyword>
<keyword id="KW-0808">Transferase</keyword>
<keyword id="KW-0862">Zinc</keyword>
<keyword id="KW-0863">Zinc-finger</keyword>
<proteinExistence type="inferred from homology"/>
<reference key="1">
    <citation type="journal article" date="2008" name="J. Bacteriol.">
        <title>The pangenome structure of Escherichia coli: comparative genomic analysis of E. coli commensal and pathogenic isolates.</title>
        <authorList>
            <person name="Rasko D.A."/>
            <person name="Rosovitz M.J."/>
            <person name="Myers G.S.A."/>
            <person name="Mongodin E.F."/>
            <person name="Fricke W.F."/>
            <person name="Gajer P."/>
            <person name="Crabtree J."/>
            <person name="Sebaihia M."/>
            <person name="Thomson N.R."/>
            <person name="Chaudhuri R."/>
            <person name="Henderson I.R."/>
            <person name="Sperandio V."/>
            <person name="Ravel J."/>
        </authorList>
    </citation>
    <scope>NUCLEOTIDE SEQUENCE [LARGE SCALE GENOMIC DNA]</scope>
    <source>
        <strain>HS</strain>
    </source>
</reference>
<accession>A8A2I5</accession>
<comment type="function">
    <text evidence="1">Component of the acetyl coenzyme A carboxylase (ACC) complex. Biotin carboxylase (BC) catalyzes the carboxylation of biotin on its carrier protein (BCCP) and then the CO(2) group is transferred by the transcarboxylase to acetyl-CoA to form malonyl-CoA.</text>
</comment>
<comment type="catalytic activity">
    <reaction evidence="1">
        <text>N(6)-carboxybiotinyl-L-lysyl-[protein] + acetyl-CoA = N(6)-biotinyl-L-lysyl-[protein] + malonyl-CoA</text>
        <dbReference type="Rhea" id="RHEA:54728"/>
        <dbReference type="Rhea" id="RHEA-COMP:10505"/>
        <dbReference type="Rhea" id="RHEA-COMP:10506"/>
        <dbReference type="ChEBI" id="CHEBI:57288"/>
        <dbReference type="ChEBI" id="CHEBI:57384"/>
        <dbReference type="ChEBI" id="CHEBI:83144"/>
        <dbReference type="ChEBI" id="CHEBI:83145"/>
        <dbReference type="EC" id="2.1.3.15"/>
    </reaction>
</comment>
<comment type="cofactor">
    <cofactor evidence="1">
        <name>Zn(2+)</name>
        <dbReference type="ChEBI" id="CHEBI:29105"/>
    </cofactor>
    <text evidence="1">Binds 1 zinc ion per subunit.</text>
</comment>
<comment type="pathway">
    <text evidence="1">Lipid metabolism; malonyl-CoA biosynthesis; malonyl-CoA from acetyl-CoA: step 1/1.</text>
</comment>
<comment type="subunit">
    <text evidence="1">Acetyl-CoA carboxylase is a heterohexamer composed of biotin carboxyl carrier protein (AccB), biotin carboxylase (AccC) and two subunits each of ACCase subunit alpha (AccA) and ACCase subunit beta (AccD).</text>
</comment>
<comment type="subcellular location">
    <subcellularLocation>
        <location evidence="1">Cytoplasm</location>
    </subcellularLocation>
</comment>
<comment type="similarity">
    <text evidence="1">Belongs to the AccD/PCCB family.</text>
</comment>
<dbReference type="EC" id="2.1.3.15" evidence="1"/>
<dbReference type="EMBL" id="CP000802">
    <property type="protein sequence ID" value="ABV06739.1"/>
    <property type="molecule type" value="Genomic_DNA"/>
</dbReference>
<dbReference type="RefSeq" id="WP_000118404.1">
    <property type="nucleotide sequence ID" value="NC_009800.1"/>
</dbReference>
<dbReference type="SMR" id="A8A2I5"/>
<dbReference type="GeneID" id="75202601"/>
<dbReference type="KEGG" id="ecx:EcHS_A2467"/>
<dbReference type="HOGENOM" id="CLU_015486_1_0_6"/>
<dbReference type="UniPathway" id="UPA00655">
    <property type="reaction ID" value="UER00711"/>
</dbReference>
<dbReference type="GO" id="GO:0009329">
    <property type="term" value="C:acetate CoA-transferase complex"/>
    <property type="evidence" value="ECO:0007669"/>
    <property type="project" value="TreeGrafter"/>
</dbReference>
<dbReference type="GO" id="GO:0003989">
    <property type="term" value="F:acetyl-CoA carboxylase activity"/>
    <property type="evidence" value="ECO:0007669"/>
    <property type="project" value="InterPro"/>
</dbReference>
<dbReference type="GO" id="GO:0005524">
    <property type="term" value="F:ATP binding"/>
    <property type="evidence" value="ECO:0007669"/>
    <property type="project" value="UniProtKB-KW"/>
</dbReference>
<dbReference type="GO" id="GO:0016743">
    <property type="term" value="F:carboxyl- or carbamoyltransferase activity"/>
    <property type="evidence" value="ECO:0007669"/>
    <property type="project" value="UniProtKB-UniRule"/>
</dbReference>
<dbReference type="GO" id="GO:0008270">
    <property type="term" value="F:zinc ion binding"/>
    <property type="evidence" value="ECO:0007669"/>
    <property type="project" value="UniProtKB-UniRule"/>
</dbReference>
<dbReference type="GO" id="GO:0006633">
    <property type="term" value="P:fatty acid biosynthetic process"/>
    <property type="evidence" value="ECO:0007669"/>
    <property type="project" value="UniProtKB-KW"/>
</dbReference>
<dbReference type="GO" id="GO:2001295">
    <property type="term" value="P:malonyl-CoA biosynthetic process"/>
    <property type="evidence" value="ECO:0007669"/>
    <property type="project" value="UniProtKB-UniRule"/>
</dbReference>
<dbReference type="FunFam" id="3.90.226.10:FF:000013">
    <property type="entry name" value="Acetyl-coenzyme A carboxylase carboxyl transferase subunit beta"/>
    <property type="match status" value="1"/>
</dbReference>
<dbReference type="Gene3D" id="3.90.226.10">
    <property type="entry name" value="2-enoyl-CoA Hydratase, Chain A, domain 1"/>
    <property type="match status" value="1"/>
</dbReference>
<dbReference type="HAMAP" id="MF_01395">
    <property type="entry name" value="AcetylCoA_CT_beta"/>
    <property type="match status" value="1"/>
</dbReference>
<dbReference type="InterPro" id="IPR034733">
    <property type="entry name" value="AcCoA_carboxyl_beta"/>
</dbReference>
<dbReference type="InterPro" id="IPR000438">
    <property type="entry name" value="Acetyl_CoA_COase_Trfase_b_su"/>
</dbReference>
<dbReference type="InterPro" id="IPR029045">
    <property type="entry name" value="ClpP/crotonase-like_dom_sf"/>
</dbReference>
<dbReference type="InterPro" id="IPR011762">
    <property type="entry name" value="COA_CT_N"/>
</dbReference>
<dbReference type="InterPro" id="IPR041010">
    <property type="entry name" value="Znf-ACC"/>
</dbReference>
<dbReference type="NCBIfam" id="TIGR00515">
    <property type="entry name" value="accD"/>
    <property type="match status" value="1"/>
</dbReference>
<dbReference type="PANTHER" id="PTHR42995">
    <property type="entry name" value="ACETYL-COENZYME A CARBOXYLASE CARBOXYL TRANSFERASE SUBUNIT BETA, CHLOROPLASTIC"/>
    <property type="match status" value="1"/>
</dbReference>
<dbReference type="PANTHER" id="PTHR42995:SF5">
    <property type="entry name" value="ACETYL-COENZYME A CARBOXYLASE CARBOXYL TRANSFERASE SUBUNIT BETA, CHLOROPLASTIC"/>
    <property type="match status" value="1"/>
</dbReference>
<dbReference type="Pfam" id="PF01039">
    <property type="entry name" value="Carboxyl_trans"/>
    <property type="match status" value="1"/>
</dbReference>
<dbReference type="Pfam" id="PF17848">
    <property type="entry name" value="Zn_ribbon_ACC"/>
    <property type="match status" value="1"/>
</dbReference>
<dbReference type="PRINTS" id="PR01070">
    <property type="entry name" value="ACCCTRFRASEB"/>
</dbReference>
<dbReference type="SUPFAM" id="SSF52096">
    <property type="entry name" value="ClpP/crotonase"/>
    <property type="match status" value="1"/>
</dbReference>
<dbReference type="PROSITE" id="PS50980">
    <property type="entry name" value="COA_CT_NTER"/>
    <property type="match status" value="1"/>
</dbReference>